<evidence type="ECO:0000255" key="1">
    <source>
        <dbReference type="HAMAP-Rule" id="MF_00503"/>
    </source>
</evidence>
<evidence type="ECO:0000305" key="2"/>
<dbReference type="EMBL" id="CP000607">
    <property type="protein sequence ID" value="ABP36207.1"/>
    <property type="molecule type" value="Genomic_DNA"/>
</dbReference>
<dbReference type="SMR" id="A4SCJ8"/>
<dbReference type="STRING" id="290318.Cvib_0184"/>
<dbReference type="KEGG" id="pvi:Cvib_0184"/>
<dbReference type="eggNOG" id="COG0359">
    <property type="taxonomic scope" value="Bacteria"/>
</dbReference>
<dbReference type="HOGENOM" id="CLU_078938_3_0_10"/>
<dbReference type="OrthoDB" id="9788336at2"/>
<dbReference type="GO" id="GO:1990904">
    <property type="term" value="C:ribonucleoprotein complex"/>
    <property type="evidence" value="ECO:0007669"/>
    <property type="project" value="UniProtKB-KW"/>
</dbReference>
<dbReference type="GO" id="GO:0005840">
    <property type="term" value="C:ribosome"/>
    <property type="evidence" value="ECO:0007669"/>
    <property type="project" value="UniProtKB-KW"/>
</dbReference>
<dbReference type="GO" id="GO:0019843">
    <property type="term" value="F:rRNA binding"/>
    <property type="evidence" value="ECO:0007669"/>
    <property type="project" value="UniProtKB-UniRule"/>
</dbReference>
<dbReference type="GO" id="GO:0003735">
    <property type="term" value="F:structural constituent of ribosome"/>
    <property type="evidence" value="ECO:0007669"/>
    <property type="project" value="InterPro"/>
</dbReference>
<dbReference type="GO" id="GO:0006412">
    <property type="term" value="P:translation"/>
    <property type="evidence" value="ECO:0007669"/>
    <property type="project" value="UniProtKB-UniRule"/>
</dbReference>
<dbReference type="FunFam" id="3.10.430.100:FF:000006">
    <property type="entry name" value="50S ribosomal protein L9"/>
    <property type="match status" value="1"/>
</dbReference>
<dbReference type="FunFam" id="3.40.5.10:FF:000003">
    <property type="entry name" value="50S ribosomal protein L9"/>
    <property type="match status" value="1"/>
</dbReference>
<dbReference type="Gene3D" id="3.10.430.100">
    <property type="entry name" value="Ribosomal protein L9, C-terminal domain"/>
    <property type="match status" value="1"/>
</dbReference>
<dbReference type="Gene3D" id="3.40.5.10">
    <property type="entry name" value="Ribosomal protein L9, N-terminal domain"/>
    <property type="match status" value="1"/>
</dbReference>
<dbReference type="HAMAP" id="MF_00503">
    <property type="entry name" value="Ribosomal_bL9"/>
    <property type="match status" value="1"/>
</dbReference>
<dbReference type="InterPro" id="IPR000244">
    <property type="entry name" value="Ribosomal_bL9"/>
</dbReference>
<dbReference type="InterPro" id="IPR009027">
    <property type="entry name" value="Ribosomal_bL9/RNase_H1_N"/>
</dbReference>
<dbReference type="InterPro" id="IPR020594">
    <property type="entry name" value="Ribosomal_bL9_bac/chp"/>
</dbReference>
<dbReference type="InterPro" id="IPR020069">
    <property type="entry name" value="Ribosomal_bL9_C"/>
</dbReference>
<dbReference type="InterPro" id="IPR036791">
    <property type="entry name" value="Ribosomal_bL9_C_sf"/>
</dbReference>
<dbReference type="InterPro" id="IPR020070">
    <property type="entry name" value="Ribosomal_bL9_N"/>
</dbReference>
<dbReference type="InterPro" id="IPR036935">
    <property type="entry name" value="Ribosomal_bL9_N_sf"/>
</dbReference>
<dbReference type="NCBIfam" id="TIGR00158">
    <property type="entry name" value="L9"/>
    <property type="match status" value="1"/>
</dbReference>
<dbReference type="PANTHER" id="PTHR21368">
    <property type="entry name" value="50S RIBOSOMAL PROTEIN L9"/>
    <property type="match status" value="1"/>
</dbReference>
<dbReference type="Pfam" id="PF03948">
    <property type="entry name" value="Ribosomal_L9_C"/>
    <property type="match status" value="1"/>
</dbReference>
<dbReference type="Pfam" id="PF01281">
    <property type="entry name" value="Ribosomal_L9_N"/>
    <property type="match status" value="1"/>
</dbReference>
<dbReference type="SUPFAM" id="SSF55658">
    <property type="entry name" value="L9 N-domain-like"/>
    <property type="match status" value="1"/>
</dbReference>
<dbReference type="SUPFAM" id="SSF55653">
    <property type="entry name" value="Ribosomal protein L9 C-domain"/>
    <property type="match status" value="1"/>
</dbReference>
<dbReference type="PROSITE" id="PS00651">
    <property type="entry name" value="RIBOSOMAL_L9"/>
    <property type="match status" value="1"/>
</dbReference>
<proteinExistence type="inferred from homology"/>
<keyword id="KW-0687">Ribonucleoprotein</keyword>
<keyword id="KW-0689">Ribosomal protein</keyword>
<keyword id="KW-0694">RNA-binding</keyword>
<keyword id="KW-0699">rRNA-binding</keyword>
<accession>A4SCJ8</accession>
<gene>
    <name evidence="1" type="primary">rplI</name>
    <name type="ordered locus">Cvib_0184</name>
</gene>
<organism>
    <name type="scientific">Chlorobium phaeovibrioides (strain DSM 265 / 1930)</name>
    <name type="common">Prosthecochloris vibrioformis (strain DSM 265)</name>
    <dbReference type="NCBI Taxonomy" id="290318"/>
    <lineage>
        <taxon>Bacteria</taxon>
        <taxon>Pseudomonadati</taxon>
        <taxon>Chlorobiota</taxon>
        <taxon>Chlorobiia</taxon>
        <taxon>Chlorobiales</taxon>
        <taxon>Chlorobiaceae</taxon>
        <taxon>Chlorobium/Pelodictyon group</taxon>
        <taxon>Chlorobium</taxon>
    </lineage>
</organism>
<feature type="chain" id="PRO_1000081492" description="Large ribosomal subunit protein bL9">
    <location>
        <begin position="1"/>
        <end position="151"/>
    </location>
</feature>
<name>RL9_CHLPM</name>
<reference key="1">
    <citation type="submission" date="2007-03" db="EMBL/GenBank/DDBJ databases">
        <title>Complete sequence of Prosthecochloris vibrioformis DSM 265.</title>
        <authorList>
            <consortium name="US DOE Joint Genome Institute"/>
            <person name="Copeland A."/>
            <person name="Lucas S."/>
            <person name="Lapidus A."/>
            <person name="Barry K."/>
            <person name="Detter J.C."/>
            <person name="Glavina del Rio T."/>
            <person name="Hammon N."/>
            <person name="Israni S."/>
            <person name="Pitluck S."/>
            <person name="Schmutz J."/>
            <person name="Larimer F."/>
            <person name="Land M."/>
            <person name="Hauser L."/>
            <person name="Mikhailova N."/>
            <person name="Li T."/>
            <person name="Overmann J."/>
            <person name="Schuster S.C."/>
            <person name="Bryant D.A."/>
            <person name="Richardson P."/>
        </authorList>
    </citation>
    <scope>NUCLEOTIDE SEQUENCE [LARGE SCALE GENOMIC DNA]</scope>
    <source>
        <strain>DSM 265 / 1930</strain>
    </source>
</reference>
<comment type="function">
    <text evidence="1">Binds to the 23S rRNA.</text>
</comment>
<comment type="similarity">
    <text evidence="1">Belongs to the bacterial ribosomal protein bL9 family.</text>
</comment>
<protein>
    <recommendedName>
        <fullName evidence="1">Large ribosomal subunit protein bL9</fullName>
    </recommendedName>
    <alternativeName>
        <fullName evidence="2">50S ribosomal protein L9</fullName>
    </alternativeName>
</protein>
<sequence length="151" mass="16377">MKVILRKDVAALGDAGEVVAVKNGYANNFLIPQGMATRATEGTLRALETEKKQQAKKMELKRKSARDLAARIEQMALKVQAKAGESGKLFGTVTAADIAEVLKAQGVEIDRRKITMEAPVKTLGKYEAEVKLFSDVVVRVSFEVEAEGVEA</sequence>